<dbReference type="EMBL" id="CP000382">
    <property type="protein sequence ID" value="ABK60587.1"/>
    <property type="molecule type" value="Genomic_DNA"/>
</dbReference>
<dbReference type="RefSeq" id="WP_003368017.1">
    <property type="nucleotide sequence ID" value="NC_008593.1"/>
</dbReference>
<dbReference type="SMR" id="A0Q1Q8"/>
<dbReference type="STRING" id="386415.NT01CX_0051"/>
<dbReference type="GeneID" id="66319351"/>
<dbReference type="KEGG" id="cno:NT01CX_0051"/>
<dbReference type="eggNOG" id="COG0828">
    <property type="taxonomic scope" value="Bacteria"/>
</dbReference>
<dbReference type="HOGENOM" id="CLU_159258_1_2_9"/>
<dbReference type="Proteomes" id="UP000008220">
    <property type="component" value="Chromosome"/>
</dbReference>
<dbReference type="GO" id="GO:1990904">
    <property type="term" value="C:ribonucleoprotein complex"/>
    <property type="evidence" value="ECO:0007669"/>
    <property type="project" value="UniProtKB-KW"/>
</dbReference>
<dbReference type="GO" id="GO:0005840">
    <property type="term" value="C:ribosome"/>
    <property type="evidence" value="ECO:0007669"/>
    <property type="project" value="UniProtKB-KW"/>
</dbReference>
<dbReference type="GO" id="GO:0003735">
    <property type="term" value="F:structural constituent of ribosome"/>
    <property type="evidence" value="ECO:0007669"/>
    <property type="project" value="InterPro"/>
</dbReference>
<dbReference type="GO" id="GO:0006412">
    <property type="term" value="P:translation"/>
    <property type="evidence" value="ECO:0007669"/>
    <property type="project" value="UniProtKB-UniRule"/>
</dbReference>
<dbReference type="Gene3D" id="1.20.5.1150">
    <property type="entry name" value="Ribosomal protein S8"/>
    <property type="match status" value="1"/>
</dbReference>
<dbReference type="HAMAP" id="MF_00358">
    <property type="entry name" value="Ribosomal_bS21"/>
    <property type="match status" value="1"/>
</dbReference>
<dbReference type="InterPro" id="IPR001911">
    <property type="entry name" value="Ribosomal_bS21"/>
</dbReference>
<dbReference type="InterPro" id="IPR018278">
    <property type="entry name" value="Ribosomal_bS21_CS"/>
</dbReference>
<dbReference type="InterPro" id="IPR038380">
    <property type="entry name" value="Ribosomal_bS21_sf"/>
</dbReference>
<dbReference type="NCBIfam" id="TIGR00030">
    <property type="entry name" value="S21p"/>
    <property type="match status" value="1"/>
</dbReference>
<dbReference type="PANTHER" id="PTHR21109">
    <property type="entry name" value="MITOCHONDRIAL 28S RIBOSOMAL PROTEIN S21"/>
    <property type="match status" value="1"/>
</dbReference>
<dbReference type="PANTHER" id="PTHR21109:SF22">
    <property type="entry name" value="SMALL RIBOSOMAL SUBUNIT PROTEIN BS21"/>
    <property type="match status" value="1"/>
</dbReference>
<dbReference type="Pfam" id="PF01165">
    <property type="entry name" value="Ribosomal_S21"/>
    <property type="match status" value="1"/>
</dbReference>
<dbReference type="PRINTS" id="PR00976">
    <property type="entry name" value="RIBOSOMALS21"/>
</dbReference>
<dbReference type="PROSITE" id="PS01181">
    <property type="entry name" value="RIBOSOMAL_S21"/>
    <property type="match status" value="1"/>
</dbReference>
<name>RS21_CLONN</name>
<organism>
    <name type="scientific">Clostridium novyi (strain NT)</name>
    <dbReference type="NCBI Taxonomy" id="386415"/>
    <lineage>
        <taxon>Bacteria</taxon>
        <taxon>Bacillati</taxon>
        <taxon>Bacillota</taxon>
        <taxon>Clostridia</taxon>
        <taxon>Eubacteriales</taxon>
        <taxon>Clostridiaceae</taxon>
        <taxon>Clostridium</taxon>
    </lineage>
</organism>
<evidence type="ECO:0000255" key="1">
    <source>
        <dbReference type="HAMAP-Rule" id="MF_00358"/>
    </source>
</evidence>
<evidence type="ECO:0000256" key="2">
    <source>
        <dbReference type="SAM" id="MobiDB-lite"/>
    </source>
</evidence>
<evidence type="ECO:0000305" key="3"/>
<feature type="chain" id="PRO_1000005112" description="Small ribosomal subunit protein bS21">
    <location>
        <begin position="1"/>
        <end position="60"/>
    </location>
</feature>
<feature type="region of interest" description="Disordered" evidence="2">
    <location>
        <begin position="35"/>
        <end position="60"/>
    </location>
</feature>
<feature type="compositionally biased region" description="Basic residues" evidence="2">
    <location>
        <begin position="43"/>
        <end position="60"/>
    </location>
</feature>
<reference key="1">
    <citation type="journal article" date="2006" name="Nat. Biotechnol.">
        <title>The genome and transcriptomes of the anti-tumor agent Clostridium novyi-NT.</title>
        <authorList>
            <person name="Bettegowda C."/>
            <person name="Huang X."/>
            <person name="Lin J."/>
            <person name="Cheong I."/>
            <person name="Kohli M."/>
            <person name="Szabo S.A."/>
            <person name="Zhang X."/>
            <person name="Diaz L.A. Jr."/>
            <person name="Velculescu V.E."/>
            <person name="Parmigiani G."/>
            <person name="Kinzler K.W."/>
            <person name="Vogelstein B."/>
            <person name="Zhou S."/>
        </authorList>
    </citation>
    <scope>NUCLEOTIDE SEQUENCE [LARGE SCALE GENOMIC DNA]</scope>
    <source>
        <strain>NT</strain>
    </source>
</reference>
<keyword id="KW-1185">Reference proteome</keyword>
<keyword id="KW-0687">Ribonucleoprotein</keyword>
<keyword id="KW-0689">Ribosomal protein</keyword>
<gene>
    <name evidence="1" type="primary">rpsU</name>
    <name type="ordered locus">NT01CX_0051</name>
</gene>
<comment type="similarity">
    <text evidence="1">Belongs to the bacterial ribosomal protein bS21 family.</text>
</comment>
<protein>
    <recommendedName>
        <fullName evidence="1">Small ribosomal subunit protein bS21</fullName>
    </recommendedName>
    <alternativeName>
        <fullName evidence="3">30S ribosomal protein S21</fullName>
    </alternativeName>
</protein>
<sequence>MSEVKVRDNESLESALKRFKRSCAKAGVLSEVRKREHYEKPSVKRKKKSEAARRRKSKVR</sequence>
<proteinExistence type="inferred from homology"/>
<accession>A0Q1Q8</accession>